<evidence type="ECO:0000255" key="1">
    <source>
        <dbReference type="HAMAP-Rule" id="MF_01320"/>
    </source>
</evidence>
<evidence type="ECO:0000256" key="2">
    <source>
        <dbReference type="SAM" id="MobiDB-lite"/>
    </source>
</evidence>
<evidence type="ECO:0000305" key="3"/>
<gene>
    <name evidence="1" type="primary">rplB</name>
    <name type="ordered locus">HPG27_1265</name>
</gene>
<name>RL2_HELPG</name>
<reference key="1">
    <citation type="journal article" date="2009" name="J. Bacteriol.">
        <title>The complete genome sequence of Helicobacter pylori strain G27.</title>
        <authorList>
            <person name="Baltrus D.A."/>
            <person name="Amieva M.R."/>
            <person name="Covacci A."/>
            <person name="Lowe T.M."/>
            <person name="Merrell D.S."/>
            <person name="Ottemann K.M."/>
            <person name="Stein M."/>
            <person name="Salama N.R."/>
            <person name="Guillemin K."/>
        </authorList>
    </citation>
    <scope>NUCLEOTIDE SEQUENCE [LARGE SCALE GENOMIC DNA]</scope>
    <source>
        <strain>G27</strain>
    </source>
</reference>
<organism>
    <name type="scientific">Helicobacter pylori (strain G27)</name>
    <dbReference type="NCBI Taxonomy" id="563041"/>
    <lineage>
        <taxon>Bacteria</taxon>
        <taxon>Pseudomonadati</taxon>
        <taxon>Campylobacterota</taxon>
        <taxon>Epsilonproteobacteria</taxon>
        <taxon>Campylobacterales</taxon>
        <taxon>Helicobacteraceae</taxon>
        <taxon>Helicobacter</taxon>
    </lineage>
</organism>
<proteinExistence type="inferred from homology"/>
<accession>B5Z8W4</accession>
<dbReference type="EMBL" id="CP001173">
    <property type="protein sequence ID" value="ACI28013.1"/>
    <property type="molecule type" value="Genomic_DNA"/>
</dbReference>
<dbReference type="RefSeq" id="WP_000985811.1">
    <property type="nucleotide sequence ID" value="NC_011333.1"/>
</dbReference>
<dbReference type="SMR" id="B5Z8W4"/>
<dbReference type="GeneID" id="93237553"/>
<dbReference type="KEGG" id="hpg:HPG27_1265"/>
<dbReference type="HOGENOM" id="CLU_036235_2_1_7"/>
<dbReference type="Proteomes" id="UP000001735">
    <property type="component" value="Chromosome"/>
</dbReference>
<dbReference type="GO" id="GO:0015934">
    <property type="term" value="C:large ribosomal subunit"/>
    <property type="evidence" value="ECO:0007669"/>
    <property type="project" value="InterPro"/>
</dbReference>
<dbReference type="GO" id="GO:0019843">
    <property type="term" value="F:rRNA binding"/>
    <property type="evidence" value="ECO:0007669"/>
    <property type="project" value="UniProtKB-UniRule"/>
</dbReference>
<dbReference type="GO" id="GO:0003735">
    <property type="term" value="F:structural constituent of ribosome"/>
    <property type="evidence" value="ECO:0007669"/>
    <property type="project" value="InterPro"/>
</dbReference>
<dbReference type="GO" id="GO:0016740">
    <property type="term" value="F:transferase activity"/>
    <property type="evidence" value="ECO:0007669"/>
    <property type="project" value="InterPro"/>
</dbReference>
<dbReference type="GO" id="GO:0002181">
    <property type="term" value="P:cytoplasmic translation"/>
    <property type="evidence" value="ECO:0007669"/>
    <property type="project" value="TreeGrafter"/>
</dbReference>
<dbReference type="FunFam" id="2.30.30.30:FF:000001">
    <property type="entry name" value="50S ribosomal protein L2"/>
    <property type="match status" value="1"/>
</dbReference>
<dbReference type="FunFam" id="2.40.50.140:FF:000003">
    <property type="entry name" value="50S ribosomal protein L2"/>
    <property type="match status" value="1"/>
</dbReference>
<dbReference type="FunFam" id="4.10.950.10:FF:000001">
    <property type="entry name" value="50S ribosomal protein L2"/>
    <property type="match status" value="1"/>
</dbReference>
<dbReference type="Gene3D" id="2.30.30.30">
    <property type="match status" value="1"/>
</dbReference>
<dbReference type="Gene3D" id="2.40.50.140">
    <property type="entry name" value="Nucleic acid-binding proteins"/>
    <property type="match status" value="1"/>
</dbReference>
<dbReference type="Gene3D" id="4.10.950.10">
    <property type="entry name" value="Ribosomal protein L2, domain 3"/>
    <property type="match status" value="1"/>
</dbReference>
<dbReference type="HAMAP" id="MF_01320_B">
    <property type="entry name" value="Ribosomal_uL2_B"/>
    <property type="match status" value="1"/>
</dbReference>
<dbReference type="InterPro" id="IPR012340">
    <property type="entry name" value="NA-bd_OB-fold"/>
</dbReference>
<dbReference type="InterPro" id="IPR014722">
    <property type="entry name" value="Rib_uL2_dom2"/>
</dbReference>
<dbReference type="InterPro" id="IPR002171">
    <property type="entry name" value="Ribosomal_uL2"/>
</dbReference>
<dbReference type="InterPro" id="IPR005880">
    <property type="entry name" value="Ribosomal_uL2_bac/org-type"/>
</dbReference>
<dbReference type="InterPro" id="IPR022669">
    <property type="entry name" value="Ribosomal_uL2_C"/>
</dbReference>
<dbReference type="InterPro" id="IPR022671">
    <property type="entry name" value="Ribosomal_uL2_CS"/>
</dbReference>
<dbReference type="InterPro" id="IPR014726">
    <property type="entry name" value="Ribosomal_uL2_dom3"/>
</dbReference>
<dbReference type="InterPro" id="IPR022666">
    <property type="entry name" value="Ribosomal_uL2_RNA-bd_dom"/>
</dbReference>
<dbReference type="InterPro" id="IPR008991">
    <property type="entry name" value="Translation_prot_SH3-like_sf"/>
</dbReference>
<dbReference type="NCBIfam" id="TIGR01171">
    <property type="entry name" value="rplB_bact"/>
    <property type="match status" value="1"/>
</dbReference>
<dbReference type="PANTHER" id="PTHR13691:SF5">
    <property type="entry name" value="LARGE RIBOSOMAL SUBUNIT PROTEIN UL2M"/>
    <property type="match status" value="1"/>
</dbReference>
<dbReference type="PANTHER" id="PTHR13691">
    <property type="entry name" value="RIBOSOMAL PROTEIN L2"/>
    <property type="match status" value="1"/>
</dbReference>
<dbReference type="Pfam" id="PF00181">
    <property type="entry name" value="Ribosomal_L2"/>
    <property type="match status" value="1"/>
</dbReference>
<dbReference type="Pfam" id="PF03947">
    <property type="entry name" value="Ribosomal_L2_C"/>
    <property type="match status" value="1"/>
</dbReference>
<dbReference type="PIRSF" id="PIRSF002158">
    <property type="entry name" value="Ribosomal_L2"/>
    <property type="match status" value="1"/>
</dbReference>
<dbReference type="SMART" id="SM01383">
    <property type="entry name" value="Ribosomal_L2"/>
    <property type="match status" value="1"/>
</dbReference>
<dbReference type="SMART" id="SM01382">
    <property type="entry name" value="Ribosomal_L2_C"/>
    <property type="match status" value="1"/>
</dbReference>
<dbReference type="SUPFAM" id="SSF50249">
    <property type="entry name" value="Nucleic acid-binding proteins"/>
    <property type="match status" value="1"/>
</dbReference>
<dbReference type="SUPFAM" id="SSF50104">
    <property type="entry name" value="Translation proteins SH3-like domain"/>
    <property type="match status" value="1"/>
</dbReference>
<dbReference type="PROSITE" id="PS00467">
    <property type="entry name" value="RIBOSOMAL_L2"/>
    <property type="match status" value="1"/>
</dbReference>
<comment type="function">
    <text evidence="1">One of the primary rRNA binding proteins. Required for association of the 30S and 50S subunits to form the 70S ribosome, for tRNA binding and peptide bond formation. It has been suggested to have peptidyltransferase activity; this is somewhat controversial. Makes several contacts with the 16S rRNA in the 70S ribosome.</text>
</comment>
<comment type="subunit">
    <text evidence="1">Part of the 50S ribosomal subunit. Forms a bridge to the 30S subunit in the 70S ribosome.</text>
</comment>
<comment type="similarity">
    <text evidence="1">Belongs to the universal ribosomal protein uL2 family.</text>
</comment>
<sequence>MAIKTYKPYTPSRRFMSVLDSKDITAKSSVKGLLTKLKATAGRNNNGRITSRHKERGAKKLYRIIDFKRNKYNIEGKVAAIEYDPYRNARIALVVYPDGDKRYILQPSGLKVGDSVIAAEGGLDIKVGFAMKLKNIPIGTVVHNIEMHPGAGGQLARSAGMSAQIMGRENKYTILRMPSSEMRYILSECMASVGVVGNEDFINVSIGKAGRNRHRGIRPQTRGSAMNPVDHPHGGGEGKTGTSGHPVSPWGTPAKGYKTRKKKASDKLIISRKKHK</sequence>
<protein>
    <recommendedName>
        <fullName evidence="1">Large ribosomal subunit protein uL2</fullName>
    </recommendedName>
    <alternativeName>
        <fullName evidence="3">50S ribosomal protein L2</fullName>
    </alternativeName>
</protein>
<feature type="chain" id="PRO_1000141562" description="Large ribosomal subunit protein uL2">
    <location>
        <begin position="1"/>
        <end position="276"/>
    </location>
</feature>
<feature type="region of interest" description="Disordered" evidence="2">
    <location>
        <begin position="212"/>
        <end position="276"/>
    </location>
</feature>
<feature type="compositionally biased region" description="Basic residues" evidence="2">
    <location>
        <begin position="257"/>
        <end position="276"/>
    </location>
</feature>
<keyword id="KW-1185">Reference proteome</keyword>
<keyword id="KW-0687">Ribonucleoprotein</keyword>
<keyword id="KW-0689">Ribosomal protein</keyword>
<keyword id="KW-0694">RNA-binding</keyword>
<keyword id="KW-0699">rRNA-binding</keyword>